<dbReference type="EMBL" id="CH466593">
    <property type="protein sequence ID" value="EDL24044.1"/>
    <property type="molecule type" value="Genomic_DNA"/>
</dbReference>
<dbReference type="EMBL" id="BC151163">
    <property type="protein sequence ID" value="AAI51164.1"/>
    <property type="molecule type" value="mRNA"/>
</dbReference>
<dbReference type="EMBL" id="AK134263">
    <property type="protein sequence ID" value="BAE22072.1"/>
    <property type="molecule type" value="mRNA"/>
</dbReference>
<dbReference type="CCDS" id="CCDS39877.1"/>
<dbReference type="RefSeq" id="NP_001074476.1">
    <property type="nucleotide sequence ID" value="NM_001081007.1"/>
</dbReference>
<dbReference type="SMR" id="B2RXC5"/>
<dbReference type="BioGRID" id="231361">
    <property type="interactions" value="27"/>
</dbReference>
<dbReference type="FunCoup" id="B2RXC5">
    <property type="interactions" value="9"/>
</dbReference>
<dbReference type="STRING" id="10090.ENSMUSP00000096196"/>
<dbReference type="PhosphoSitePlus" id="B2RXC5"/>
<dbReference type="PaxDb" id="10090-ENSMUSP00000096196"/>
<dbReference type="ProteomicsDB" id="275010"/>
<dbReference type="Antibodypedia" id="16319">
    <property type="antibodies" value="28 antibodies from 14 providers"/>
</dbReference>
<dbReference type="Ensembl" id="ENSMUST00000098596.11">
    <property type="protein sequence ID" value="ENSMUSP00000096196.4"/>
    <property type="gene ID" value="ENSMUSG00000074220.11"/>
</dbReference>
<dbReference type="GeneID" id="233060"/>
<dbReference type="KEGG" id="mmu:233060"/>
<dbReference type="UCSC" id="uc009gdf.1">
    <property type="organism name" value="mouse"/>
</dbReference>
<dbReference type="AGR" id="MGI:3588204"/>
<dbReference type="CTD" id="233060"/>
<dbReference type="MGI" id="MGI:3588204">
    <property type="gene designation" value="Zfp382"/>
</dbReference>
<dbReference type="VEuPathDB" id="HostDB:ENSMUSG00000074220"/>
<dbReference type="eggNOG" id="KOG1721">
    <property type="taxonomic scope" value="Eukaryota"/>
</dbReference>
<dbReference type="GeneTree" id="ENSGT00940000162338"/>
<dbReference type="HOGENOM" id="CLU_002678_44_5_1"/>
<dbReference type="InParanoid" id="B2RXC5"/>
<dbReference type="OMA" id="HKVETMR"/>
<dbReference type="OrthoDB" id="9651002at2759"/>
<dbReference type="PhylomeDB" id="B2RXC5"/>
<dbReference type="TreeFam" id="TF337898"/>
<dbReference type="Reactome" id="R-MMU-212436">
    <property type="pathway name" value="Generic Transcription Pathway"/>
</dbReference>
<dbReference type="Reactome" id="R-MMU-9843940">
    <property type="pathway name" value="Regulation of endogenous retroelements by KRAB-ZFP proteins"/>
</dbReference>
<dbReference type="BioGRID-ORCS" id="233060">
    <property type="hits" value="2 hits in 78 CRISPR screens"/>
</dbReference>
<dbReference type="PRO" id="PR:B2RXC5"/>
<dbReference type="Proteomes" id="UP000000589">
    <property type="component" value="Chromosome 7"/>
</dbReference>
<dbReference type="RNAct" id="B2RXC5">
    <property type="molecule type" value="protein"/>
</dbReference>
<dbReference type="Bgee" id="ENSMUSG00000074220">
    <property type="expression patterns" value="Expressed in spermatocyte and 66 other cell types or tissues"/>
</dbReference>
<dbReference type="ExpressionAtlas" id="B2RXC5">
    <property type="expression patterns" value="baseline and differential"/>
</dbReference>
<dbReference type="GO" id="GO:0005634">
    <property type="term" value="C:nucleus"/>
    <property type="evidence" value="ECO:0007669"/>
    <property type="project" value="UniProtKB-SubCell"/>
</dbReference>
<dbReference type="GO" id="GO:0003677">
    <property type="term" value="F:DNA binding"/>
    <property type="evidence" value="ECO:0007669"/>
    <property type="project" value="UniProtKB-KW"/>
</dbReference>
<dbReference type="GO" id="GO:0008270">
    <property type="term" value="F:zinc ion binding"/>
    <property type="evidence" value="ECO:0007669"/>
    <property type="project" value="UniProtKB-KW"/>
</dbReference>
<dbReference type="GO" id="GO:0006355">
    <property type="term" value="P:regulation of DNA-templated transcription"/>
    <property type="evidence" value="ECO:0007669"/>
    <property type="project" value="InterPro"/>
</dbReference>
<dbReference type="CDD" id="cd07765">
    <property type="entry name" value="KRAB_A-box"/>
    <property type="match status" value="1"/>
</dbReference>
<dbReference type="FunFam" id="3.30.160.60:FF:000029">
    <property type="entry name" value="GLI family zinc finger 4"/>
    <property type="match status" value="1"/>
</dbReference>
<dbReference type="FunFam" id="3.30.160.60:FF:002343">
    <property type="entry name" value="Zinc finger protein 33A"/>
    <property type="match status" value="1"/>
</dbReference>
<dbReference type="FunFam" id="3.30.160.60:FF:000212">
    <property type="entry name" value="zinc finger protein 382 isoform X2"/>
    <property type="match status" value="2"/>
</dbReference>
<dbReference type="FunFam" id="3.30.160.60:FF:000200">
    <property type="entry name" value="zinc finger protein 510 isoform X2"/>
    <property type="match status" value="1"/>
</dbReference>
<dbReference type="FunFam" id="3.30.160.60:FF:000384">
    <property type="entry name" value="Zinc finger protein 550"/>
    <property type="match status" value="1"/>
</dbReference>
<dbReference type="FunFam" id="3.30.160.60:FF:001270">
    <property type="entry name" value="zinc finger protein 583 isoform X1"/>
    <property type="match status" value="1"/>
</dbReference>
<dbReference type="FunFam" id="3.30.160.60:FF:000410">
    <property type="entry name" value="Zinc finger protein 777"/>
    <property type="match status" value="1"/>
</dbReference>
<dbReference type="FunFam" id="3.30.160.60:FF:001011">
    <property type="entry name" value="Zinc finger protein 793"/>
    <property type="match status" value="1"/>
</dbReference>
<dbReference type="Gene3D" id="6.10.140.140">
    <property type="match status" value="1"/>
</dbReference>
<dbReference type="Gene3D" id="3.30.160.60">
    <property type="entry name" value="Classic Zinc Finger"/>
    <property type="match status" value="9"/>
</dbReference>
<dbReference type="InterPro" id="IPR050589">
    <property type="entry name" value="Ikaros_C2H2-ZF"/>
</dbReference>
<dbReference type="InterPro" id="IPR001909">
    <property type="entry name" value="KRAB"/>
</dbReference>
<dbReference type="InterPro" id="IPR036051">
    <property type="entry name" value="KRAB_dom_sf"/>
</dbReference>
<dbReference type="InterPro" id="IPR036236">
    <property type="entry name" value="Znf_C2H2_sf"/>
</dbReference>
<dbReference type="InterPro" id="IPR013087">
    <property type="entry name" value="Znf_C2H2_type"/>
</dbReference>
<dbReference type="PANTHER" id="PTHR24404:SF114">
    <property type="entry name" value="KLUMPFUSS, ISOFORM B-RELATED"/>
    <property type="match status" value="1"/>
</dbReference>
<dbReference type="PANTHER" id="PTHR24404">
    <property type="entry name" value="ZINC FINGER PROTEIN"/>
    <property type="match status" value="1"/>
</dbReference>
<dbReference type="Pfam" id="PF01352">
    <property type="entry name" value="KRAB"/>
    <property type="match status" value="1"/>
</dbReference>
<dbReference type="Pfam" id="PF00096">
    <property type="entry name" value="zf-C2H2"/>
    <property type="match status" value="9"/>
</dbReference>
<dbReference type="SMART" id="SM00349">
    <property type="entry name" value="KRAB"/>
    <property type="match status" value="1"/>
</dbReference>
<dbReference type="SMART" id="SM00355">
    <property type="entry name" value="ZnF_C2H2"/>
    <property type="match status" value="9"/>
</dbReference>
<dbReference type="SUPFAM" id="SSF57667">
    <property type="entry name" value="beta-beta-alpha zinc fingers"/>
    <property type="match status" value="5"/>
</dbReference>
<dbReference type="SUPFAM" id="SSF109640">
    <property type="entry name" value="KRAB domain (Kruppel-associated box)"/>
    <property type="match status" value="1"/>
</dbReference>
<dbReference type="PROSITE" id="PS50805">
    <property type="entry name" value="KRAB"/>
    <property type="match status" value="1"/>
</dbReference>
<dbReference type="PROSITE" id="PS00028">
    <property type="entry name" value="ZINC_FINGER_C2H2_1"/>
    <property type="match status" value="9"/>
</dbReference>
<dbReference type="PROSITE" id="PS50157">
    <property type="entry name" value="ZINC_FINGER_C2H2_2"/>
    <property type="match status" value="9"/>
</dbReference>
<protein>
    <recommendedName>
        <fullName>Zinc finger protein 382</fullName>
    </recommendedName>
    <alternativeName>
        <fullName>KRAB/zinc finger suppressor protein 1</fullName>
        <shortName>KS1</shortName>
    </alternativeName>
    <alternativeName>
        <fullName>Multiple zinc finger and krueppel-associated box protein KS1</fullName>
    </alternativeName>
</protein>
<organism>
    <name type="scientific">Mus musculus</name>
    <name type="common">Mouse</name>
    <dbReference type="NCBI Taxonomy" id="10090"/>
    <lineage>
        <taxon>Eukaryota</taxon>
        <taxon>Metazoa</taxon>
        <taxon>Chordata</taxon>
        <taxon>Craniata</taxon>
        <taxon>Vertebrata</taxon>
        <taxon>Euteleostomi</taxon>
        <taxon>Mammalia</taxon>
        <taxon>Eutheria</taxon>
        <taxon>Euarchontoglires</taxon>
        <taxon>Glires</taxon>
        <taxon>Rodentia</taxon>
        <taxon>Myomorpha</taxon>
        <taxon>Muroidea</taxon>
        <taxon>Muridae</taxon>
        <taxon>Murinae</taxon>
        <taxon>Mus</taxon>
        <taxon>Mus</taxon>
    </lineage>
</organism>
<sequence>MGRPGRKPRGRARPGLFPFPKEELRQGGSSPANLNAMSKGPVSFKDVTVDFTQEEWQRLDPAQKALYRDVMLENYCHFISVGFHITKPDMIRKLEQGEELWTERIFPSQSYLEEEEVLVKFSDYQDKPPKSIVIIKHKKLIKERSSVYGEALGKNRVVSKTLFEYKSDGKVLKNISEFISRDINPAMGKLGGSKEWEGSILTSKQEKTHPASILHKQIGRALSSEWDLAQHQKTQIPEQRFEYNKCDSSFLMTGVEFPHGRAHRGGGNFNYSKDDITLFEKSDLGIHPHDLMEKKCSSYNKYGELLCRKSVFVMHPSSQMDERPFQCPYCGNSFRRKSYLIEHERIHTGEKPYICCQCGRAFRQKTALTLHEKTHTEGKPYLCVDCGKSFRQKATLTRHHKAHTGEKAYECTQCGSAFGKKSYLIDHQRTHTGEKPYQCTECGKAFIQKTTLTVHQRTHTGEKPYICSECGKSFCQKTTLTLHQRIHTGEKPYICSDCGKSFRQKAILTVHYRIHTGEKSNGCPQCGKAFSRKSNLIRHQKIHTGEKPYECQECGKFFSCKSNLITHQKTHKTETMRFQ</sequence>
<gene>
    <name type="primary">Znf382</name>
    <name type="synonym">Zfp382</name>
</gene>
<feature type="chain" id="PRO_0000361567" description="Zinc finger protein 382">
    <location>
        <begin position="1"/>
        <end position="579"/>
    </location>
</feature>
<feature type="domain" description="KRAB" evidence="3">
    <location>
        <begin position="42"/>
        <end position="113"/>
    </location>
</feature>
<feature type="zinc finger region" description="C2H2-type 1; degenerate" evidence="2">
    <location>
        <begin position="241"/>
        <end position="263"/>
    </location>
</feature>
<feature type="zinc finger region" description="C2H2-type 2" evidence="2">
    <location>
        <begin position="325"/>
        <end position="347"/>
    </location>
</feature>
<feature type="zinc finger region" description="C2H2-type 3" evidence="2">
    <location>
        <begin position="353"/>
        <end position="375"/>
    </location>
</feature>
<feature type="zinc finger region" description="C2H2-type 4" evidence="2">
    <location>
        <begin position="381"/>
        <end position="403"/>
    </location>
</feature>
<feature type="zinc finger region" description="C2H2-type 5" evidence="2">
    <location>
        <begin position="409"/>
        <end position="431"/>
    </location>
</feature>
<feature type="zinc finger region" description="C2H2-type 6" evidence="2">
    <location>
        <begin position="437"/>
        <end position="459"/>
    </location>
</feature>
<feature type="zinc finger region" description="C2H2-type 7" evidence="2">
    <location>
        <begin position="465"/>
        <end position="487"/>
    </location>
</feature>
<feature type="zinc finger region" description="C2H2-type 8" evidence="2">
    <location>
        <begin position="493"/>
        <end position="515"/>
    </location>
</feature>
<feature type="zinc finger region" description="C2H2-type 9" evidence="2">
    <location>
        <begin position="521"/>
        <end position="543"/>
    </location>
</feature>
<feature type="zinc finger region" description="C2H2-type 10" evidence="2">
    <location>
        <begin position="549"/>
        <end position="571"/>
    </location>
</feature>
<feature type="region of interest" description="Disordered" evidence="4">
    <location>
        <begin position="1"/>
        <end position="37"/>
    </location>
</feature>
<feature type="region of interest" description="Mediates interaction with TRIM28" evidence="1">
    <location>
        <begin position="12"/>
        <end position="135"/>
    </location>
</feature>
<feature type="region of interest" description="Represses transcription" evidence="1">
    <location>
        <begin position="40"/>
        <end position="81"/>
    </location>
</feature>
<feature type="region of interest" description="Represses transcription" evidence="1">
    <location>
        <begin position="105"/>
        <end position="240"/>
    </location>
</feature>
<feature type="region of interest" description="Required for transcriptional repression activity; probably mediates sequence-specific DNA-binding" evidence="1">
    <location>
        <begin position="325"/>
        <end position="579"/>
    </location>
</feature>
<feature type="compositionally biased region" description="Basic residues" evidence="4">
    <location>
        <begin position="1"/>
        <end position="12"/>
    </location>
</feature>
<feature type="compositionally biased region" description="Polar residues" evidence="4">
    <location>
        <begin position="27"/>
        <end position="36"/>
    </location>
</feature>
<feature type="sequence conflict" description="In Ref. 3; BAE22072." evidence="6" ref="3">
    <original>M</original>
    <variation>T</variation>
    <location>
        <position position="576"/>
    </location>
</feature>
<comment type="function">
    <text evidence="1">Functions as a sequence-specific transcriptional repressor.</text>
</comment>
<comment type="subunit">
    <text evidence="5">Interacts with TRIM28; enhances the transcriptional repressor activity.</text>
</comment>
<comment type="subcellular location">
    <subcellularLocation>
        <location evidence="1">Nucleus</location>
    </subcellularLocation>
</comment>
<comment type="similarity">
    <text evidence="6">Belongs to the krueppel C2H2-type zinc-finger protein family.</text>
</comment>
<comment type="caution">
    <text evidence="6">It is uncertain whether Met-1 or Met-37 is the initiator.</text>
</comment>
<evidence type="ECO:0000250" key="1"/>
<evidence type="ECO:0000255" key="2">
    <source>
        <dbReference type="PROSITE-ProRule" id="PRU00042"/>
    </source>
</evidence>
<evidence type="ECO:0000255" key="3">
    <source>
        <dbReference type="PROSITE-ProRule" id="PRU00119"/>
    </source>
</evidence>
<evidence type="ECO:0000256" key="4">
    <source>
        <dbReference type="SAM" id="MobiDB-lite"/>
    </source>
</evidence>
<evidence type="ECO:0000269" key="5">
    <source>
    </source>
</evidence>
<evidence type="ECO:0000305" key="6"/>
<reference key="1">
    <citation type="submission" date="2005-09" db="EMBL/GenBank/DDBJ databases">
        <authorList>
            <person name="Mural R.J."/>
            <person name="Adams M.D."/>
            <person name="Myers E.W."/>
            <person name="Smith H.O."/>
            <person name="Venter J.C."/>
        </authorList>
    </citation>
    <scope>NUCLEOTIDE SEQUENCE [LARGE SCALE GENOMIC DNA]</scope>
</reference>
<reference key="2">
    <citation type="journal article" date="2004" name="Genome Res.">
        <title>The status, quality, and expansion of the NIH full-length cDNA project: the Mammalian Gene Collection (MGC).</title>
        <authorList>
            <consortium name="The MGC Project Team"/>
        </authorList>
    </citation>
    <scope>NUCLEOTIDE SEQUENCE [LARGE SCALE MRNA]</scope>
    <source>
        <tissue>Brain</tissue>
    </source>
</reference>
<reference key="3">
    <citation type="journal article" date="2005" name="Science">
        <title>The transcriptional landscape of the mammalian genome.</title>
        <authorList>
            <person name="Carninci P."/>
            <person name="Kasukawa T."/>
            <person name="Katayama S."/>
            <person name="Gough J."/>
            <person name="Frith M.C."/>
            <person name="Maeda N."/>
            <person name="Oyama R."/>
            <person name="Ravasi T."/>
            <person name="Lenhard B."/>
            <person name="Wells C."/>
            <person name="Kodzius R."/>
            <person name="Shimokawa K."/>
            <person name="Bajic V.B."/>
            <person name="Brenner S.E."/>
            <person name="Batalov S."/>
            <person name="Forrest A.R."/>
            <person name="Zavolan M."/>
            <person name="Davis M.J."/>
            <person name="Wilming L.G."/>
            <person name="Aidinis V."/>
            <person name="Allen J.E."/>
            <person name="Ambesi-Impiombato A."/>
            <person name="Apweiler R."/>
            <person name="Aturaliya R.N."/>
            <person name="Bailey T.L."/>
            <person name="Bansal M."/>
            <person name="Baxter L."/>
            <person name="Beisel K.W."/>
            <person name="Bersano T."/>
            <person name="Bono H."/>
            <person name="Chalk A.M."/>
            <person name="Chiu K.P."/>
            <person name="Choudhary V."/>
            <person name="Christoffels A."/>
            <person name="Clutterbuck D.R."/>
            <person name="Crowe M.L."/>
            <person name="Dalla E."/>
            <person name="Dalrymple B.P."/>
            <person name="de Bono B."/>
            <person name="Della Gatta G."/>
            <person name="di Bernardo D."/>
            <person name="Down T."/>
            <person name="Engstrom P."/>
            <person name="Fagiolini M."/>
            <person name="Faulkner G."/>
            <person name="Fletcher C.F."/>
            <person name="Fukushima T."/>
            <person name="Furuno M."/>
            <person name="Futaki S."/>
            <person name="Gariboldi M."/>
            <person name="Georgii-Hemming P."/>
            <person name="Gingeras T.R."/>
            <person name="Gojobori T."/>
            <person name="Green R.E."/>
            <person name="Gustincich S."/>
            <person name="Harbers M."/>
            <person name="Hayashi Y."/>
            <person name="Hensch T.K."/>
            <person name="Hirokawa N."/>
            <person name="Hill D."/>
            <person name="Huminiecki L."/>
            <person name="Iacono M."/>
            <person name="Ikeo K."/>
            <person name="Iwama A."/>
            <person name="Ishikawa T."/>
            <person name="Jakt M."/>
            <person name="Kanapin A."/>
            <person name="Katoh M."/>
            <person name="Kawasawa Y."/>
            <person name="Kelso J."/>
            <person name="Kitamura H."/>
            <person name="Kitano H."/>
            <person name="Kollias G."/>
            <person name="Krishnan S.P."/>
            <person name="Kruger A."/>
            <person name="Kummerfeld S.K."/>
            <person name="Kurochkin I.V."/>
            <person name="Lareau L.F."/>
            <person name="Lazarevic D."/>
            <person name="Lipovich L."/>
            <person name="Liu J."/>
            <person name="Liuni S."/>
            <person name="McWilliam S."/>
            <person name="Madan Babu M."/>
            <person name="Madera M."/>
            <person name="Marchionni L."/>
            <person name="Matsuda H."/>
            <person name="Matsuzawa S."/>
            <person name="Miki H."/>
            <person name="Mignone F."/>
            <person name="Miyake S."/>
            <person name="Morris K."/>
            <person name="Mottagui-Tabar S."/>
            <person name="Mulder N."/>
            <person name="Nakano N."/>
            <person name="Nakauchi H."/>
            <person name="Ng P."/>
            <person name="Nilsson R."/>
            <person name="Nishiguchi S."/>
            <person name="Nishikawa S."/>
            <person name="Nori F."/>
            <person name="Ohara O."/>
            <person name="Okazaki Y."/>
            <person name="Orlando V."/>
            <person name="Pang K.C."/>
            <person name="Pavan W.J."/>
            <person name="Pavesi G."/>
            <person name="Pesole G."/>
            <person name="Petrovsky N."/>
            <person name="Piazza S."/>
            <person name="Reed J."/>
            <person name="Reid J.F."/>
            <person name="Ring B.Z."/>
            <person name="Ringwald M."/>
            <person name="Rost B."/>
            <person name="Ruan Y."/>
            <person name="Salzberg S.L."/>
            <person name="Sandelin A."/>
            <person name="Schneider C."/>
            <person name="Schoenbach C."/>
            <person name="Sekiguchi K."/>
            <person name="Semple C.A."/>
            <person name="Seno S."/>
            <person name="Sessa L."/>
            <person name="Sheng Y."/>
            <person name="Shibata Y."/>
            <person name="Shimada H."/>
            <person name="Shimada K."/>
            <person name="Silva D."/>
            <person name="Sinclair B."/>
            <person name="Sperling S."/>
            <person name="Stupka E."/>
            <person name="Sugiura K."/>
            <person name="Sultana R."/>
            <person name="Takenaka Y."/>
            <person name="Taki K."/>
            <person name="Tammoja K."/>
            <person name="Tan S.L."/>
            <person name="Tang S."/>
            <person name="Taylor M.S."/>
            <person name="Tegner J."/>
            <person name="Teichmann S.A."/>
            <person name="Ueda H.R."/>
            <person name="van Nimwegen E."/>
            <person name="Verardo R."/>
            <person name="Wei C.L."/>
            <person name="Yagi K."/>
            <person name="Yamanishi H."/>
            <person name="Zabarovsky E."/>
            <person name="Zhu S."/>
            <person name="Zimmer A."/>
            <person name="Hide W."/>
            <person name="Bult C."/>
            <person name="Grimmond S.M."/>
            <person name="Teasdale R.D."/>
            <person name="Liu E.T."/>
            <person name="Brusic V."/>
            <person name="Quackenbush J."/>
            <person name="Wahlestedt C."/>
            <person name="Mattick J.S."/>
            <person name="Hume D.A."/>
            <person name="Kai C."/>
            <person name="Sasaki D."/>
            <person name="Tomaru Y."/>
            <person name="Fukuda S."/>
            <person name="Kanamori-Katayama M."/>
            <person name="Suzuki M."/>
            <person name="Aoki J."/>
            <person name="Arakawa T."/>
            <person name="Iida J."/>
            <person name="Imamura K."/>
            <person name="Itoh M."/>
            <person name="Kato T."/>
            <person name="Kawaji H."/>
            <person name="Kawagashira N."/>
            <person name="Kawashima T."/>
            <person name="Kojima M."/>
            <person name="Kondo S."/>
            <person name="Konno H."/>
            <person name="Nakano K."/>
            <person name="Ninomiya N."/>
            <person name="Nishio T."/>
            <person name="Okada M."/>
            <person name="Plessy C."/>
            <person name="Shibata K."/>
            <person name="Shiraki T."/>
            <person name="Suzuki S."/>
            <person name="Tagami M."/>
            <person name="Waki K."/>
            <person name="Watahiki A."/>
            <person name="Okamura-Oho Y."/>
            <person name="Suzuki H."/>
            <person name="Kawai J."/>
            <person name="Hayashizaki Y."/>
        </authorList>
    </citation>
    <scope>NUCLEOTIDE SEQUENCE [LARGE SCALE MRNA] OF 1-578</scope>
    <source>
        <strain>C57BL/6J</strain>
        <tissue>Forelimb</tissue>
    </source>
</reference>
<reference key="4">
    <citation type="journal article" date="2001" name="Mol. Cell. Biol.">
        <title>Sequence-specific transcriptional repression by KS1, a multiple-zinc-finger-Kruppel-associated box protein.</title>
        <authorList>
            <person name="Gebelein B."/>
            <person name="Urrutia R."/>
        </authorList>
    </citation>
    <scope>INTERACTION WITH TRIM28</scope>
</reference>
<proteinExistence type="evidence at protein level"/>
<keyword id="KW-0238">DNA-binding</keyword>
<keyword id="KW-0479">Metal-binding</keyword>
<keyword id="KW-0539">Nucleus</keyword>
<keyword id="KW-1185">Reference proteome</keyword>
<keyword id="KW-0677">Repeat</keyword>
<keyword id="KW-0678">Repressor</keyword>
<keyword id="KW-0804">Transcription</keyword>
<keyword id="KW-0805">Transcription regulation</keyword>
<keyword id="KW-0862">Zinc</keyword>
<keyword id="KW-0863">Zinc-finger</keyword>
<accession>B2RXC5</accession>
<accession>Q3UYY9</accession>
<name>ZN382_MOUSE</name>